<feature type="chain" id="PRO_0000412207" description="CASP-like protein 1U1">
    <location>
        <begin position="1"/>
        <end position="184"/>
    </location>
</feature>
<feature type="topological domain" description="Cytoplasmic" evidence="2">
    <location>
        <begin position="1"/>
        <end position="30"/>
    </location>
</feature>
<feature type="transmembrane region" description="Helical" evidence="2">
    <location>
        <begin position="31"/>
        <end position="51"/>
    </location>
</feature>
<feature type="topological domain" description="Extracellular" evidence="2">
    <location>
        <begin position="52"/>
        <end position="76"/>
    </location>
</feature>
<feature type="transmembrane region" description="Helical" evidence="2">
    <location>
        <begin position="77"/>
        <end position="97"/>
    </location>
</feature>
<feature type="topological domain" description="Cytoplasmic" evidence="2">
    <location>
        <begin position="98"/>
        <end position="111"/>
    </location>
</feature>
<feature type="transmembrane region" description="Helical" evidence="2">
    <location>
        <begin position="112"/>
        <end position="132"/>
    </location>
</feature>
<feature type="topological domain" description="Extracellular" evidence="2">
    <location>
        <begin position="133"/>
        <end position="154"/>
    </location>
</feature>
<feature type="transmembrane region" description="Helical" evidence="2">
    <location>
        <begin position="155"/>
        <end position="175"/>
    </location>
</feature>
<feature type="topological domain" description="Cytoplasmic" evidence="2">
    <location>
        <begin position="176"/>
        <end position="184"/>
    </location>
</feature>
<sequence length="184" mass="19856">MSSTGTTLSASEGDKGFRNGAAPAKSKSHSTIALLRLLAFAATLSAFVTMITNKQKITIGPFTRWSKWHYSDAFMWFVVANCIAFIYLLFAAILGLISHSPMLVKHLVILDLIVSYMLFSAASAATAVAYIGKNGISQPGWTAICGVFERYCHHVAGALVACFLGWLFLTIAVFLGMRRSPAAV</sequence>
<protein>
    <recommendedName>
        <fullName>CASP-like protein 1U1</fullName>
        <shortName>MpCASPL1U1</shortName>
    </recommendedName>
</protein>
<comment type="subunit">
    <text evidence="1">Homodimer and heterodimers.</text>
</comment>
<comment type="subcellular location">
    <subcellularLocation>
        <location evidence="1">Cell membrane</location>
        <topology evidence="1">Multi-pass membrane protein</topology>
    </subcellularLocation>
</comment>
<comment type="similarity">
    <text evidence="3">Belongs to the Casparian strip membrane proteins (CASP) family.</text>
</comment>
<proteinExistence type="evidence at transcript level"/>
<accession>P0DH83</accession>
<name>CSPL2_MARPO</name>
<organism>
    <name type="scientific">Marchantia polymorpha</name>
    <name type="common">Common liverwort</name>
    <name type="synonym">Marchantia aquatica</name>
    <dbReference type="NCBI Taxonomy" id="3197"/>
    <lineage>
        <taxon>Eukaryota</taxon>
        <taxon>Viridiplantae</taxon>
        <taxon>Streptophyta</taxon>
        <taxon>Embryophyta</taxon>
        <taxon>Marchantiophyta</taxon>
        <taxon>Marchantiopsida</taxon>
        <taxon>Marchantiidae</taxon>
        <taxon>Marchantiales</taxon>
        <taxon>Marchantiaceae</taxon>
        <taxon>Marchantia</taxon>
    </lineage>
</organism>
<keyword id="KW-1003">Cell membrane</keyword>
<keyword id="KW-0472">Membrane</keyword>
<keyword id="KW-0812">Transmembrane</keyword>
<keyword id="KW-1133">Transmembrane helix</keyword>
<dbReference type="EMBL" id="BJ844342">
    <property type="status" value="NOT_ANNOTATED_CDS"/>
    <property type="molecule type" value="mRNA"/>
</dbReference>
<dbReference type="EMBL" id="BJ851460">
    <property type="status" value="NOT_ANNOTATED_CDS"/>
    <property type="molecule type" value="mRNA"/>
</dbReference>
<dbReference type="SMR" id="P0DH83"/>
<dbReference type="EnsemblPlants" id="Mp3g16500.1">
    <property type="protein sequence ID" value="Mp3g16500.1.cds"/>
    <property type="gene ID" value="Mp3g16500"/>
</dbReference>
<dbReference type="Gramene" id="Mp3g16500.1">
    <property type="protein sequence ID" value="Mp3g16500.1.cds"/>
    <property type="gene ID" value="Mp3g16500"/>
</dbReference>
<dbReference type="OMA" id="PKFCDQI"/>
<dbReference type="OrthoDB" id="1926504at2759"/>
<dbReference type="GO" id="GO:0005886">
    <property type="term" value="C:plasma membrane"/>
    <property type="evidence" value="ECO:0007669"/>
    <property type="project" value="UniProtKB-SubCell"/>
</dbReference>
<dbReference type="InterPro" id="IPR006459">
    <property type="entry name" value="CASP/CASPL"/>
</dbReference>
<dbReference type="InterPro" id="IPR006702">
    <property type="entry name" value="CASP_dom"/>
</dbReference>
<dbReference type="InterPro" id="IPR044173">
    <property type="entry name" value="CASPL"/>
</dbReference>
<dbReference type="NCBIfam" id="TIGR01569">
    <property type="entry name" value="A_tha_TIGR01569"/>
    <property type="match status" value="1"/>
</dbReference>
<dbReference type="PANTHER" id="PTHR36488">
    <property type="entry name" value="CASP-LIKE PROTEIN 1U1"/>
    <property type="match status" value="1"/>
</dbReference>
<dbReference type="PANTHER" id="PTHR36488:SF8">
    <property type="entry name" value="CASP-LIKE PROTEIN 1U1"/>
    <property type="match status" value="1"/>
</dbReference>
<dbReference type="Pfam" id="PF04535">
    <property type="entry name" value="CASP_dom"/>
    <property type="match status" value="1"/>
</dbReference>
<reference key="1">
    <citation type="journal article" date="2007" name="Proc. Natl. Acad. Sci. U.S.A.">
        <title>Gene organization of the liverwort Y chromosome reveals distinct sex chromosome evolution in a haploid system.</title>
        <authorList>
            <person name="Yamato K.T."/>
            <person name="Ishizaki K."/>
            <person name="Fujisawa M."/>
            <person name="Okada S."/>
            <person name="Nakayama S."/>
            <person name="Fujishita M."/>
            <person name="Bando H."/>
            <person name="Yodoya K."/>
            <person name="Hayashi K."/>
            <person name="Bando T."/>
            <person name="Hasumi A."/>
            <person name="Nishio T."/>
            <person name="Sakata R."/>
            <person name="Yamamoto M."/>
            <person name="Yamaki A."/>
            <person name="Kajikawa M."/>
            <person name="Yamano T."/>
            <person name="Nishide T."/>
            <person name="Choi S."/>
            <person name="Shimizu-Ueda Y."/>
            <person name="Hanajiri T."/>
            <person name="Sakaida M."/>
            <person name="Kohno K."/>
            <person name="Takenaka M."/>
            <person name="Yamaoka S."/>
            <person name="Kuriyama C."/>
            <person name="Kohzu Y."/>
            <person name="Nishida H."/>
            <person name="Brennicke A."/>
            <person name="Shin-i T."/>
            <person name="Kohara Y."/>
            <person name="Kohchi T."/>
            <person name="Fukuzawa H."/>
            <person name="Ohyama K."/>
        </authorList>
    </citation>
    <scope>NUCLEOTIDE SEQUENCE [LARGE SCALE MRNA]</scope>
    <source>
        <tissue>Thallus</tissue>
    </source>
</reference>
<reference key="2">
    <citation type="journal article" date="2014" name="Plant Physiol.">
        <title>Functional and evolutionary analysis of the CASPARIAN STRIP MEMBRANE DOMAIN PROTEIN family.</title>
        <authorList>
            <person name="Roppolo D."/>
            <person name="Boeckmann B."/>
            <person name="Pfister A."/>
            <person name="Boutet E."/>
            <person name="Rubio M.C."/>
            <person name="Denervaud-Tendon V."/>
            <person name="Vermeer J.E."/>
            <person name="Gheyselinck J."/>
            <person name="Xenarios I."/>
            <person name="Geldner N."/>
        </authorList>
    </citation>
    <scope>GENE FAMILY</scope>
    <scope>NOMENCLATURE</scope>
</reference>
<evidence type="ECO:0000250" key="1"/>
<evidence type="ECO:0000255" key="2"/>
<evidence type="ECO:0000305" key="3"/>